<dbReference type="EC" id="6.5.1.2" evidence="1"/>
<dbReference type="EMBL" id="CP000950">
    <property type="protein sequence ID" value="ACA70434.1"/>
    <property type="molecule type" value="Genomic_DNA"/>
</dbReference>
<dbReference type="RefSeq" id="WP_002215674.1">
    <property type="nucleotide sequence ID" value="NZ_CP009792.1"/>
</dbReference>
<dbReference type="SMR" id="B1JQZ3"/>
<dbReference type="GeneID" id="57974549"/>
<dbReference type="KEGG" id="ypy:YPK_4175"/>
<dbReference type="PATRIC" id="fig|502800.11.peg.526"/>
<dbReference type="GO" id="GO:0003911">
    <property type="term" value="F:DNA ligase (NAD+) activity"/>
    <property type="evidence" value="ECO:0007669"/>
    <property type="project" value="UniProtKB-UniRule"/>
</dbReference>
<dbReference type="GO" id="GO:0006281">
    <property type="term" value="P:DNA repair"/>
    <property type="evidence" value="ECO:0007669"/>
    <property type="project" value="UniProtKB-KW"/>
</dbReference>
<dbReference type="GO" id="GO:0006260">
    <property type="term" value="P:DNA replication"/>
    <property type="evidence" value="ECO:0007669"/>
    <property type="project" value="UniProtKB-KW"/>
</dbReference>
<dbReference type="CDD" id="cd00114">
    <property type="entry name" value="LIGANc"/>
    <property type="match status" value="1"/>
</dbReference>
<dbReference type="FunFam" id="2.40.50.140:FF:000139">
    <property type="entry name" value="DNA ligase B"/>
    <property type="match status" value="1"/>
</dbReference>
<dbReference type="FunFam" id="3.30.470.30:FF:000007">
    <property type="entry name" value="DNA ligase B"/>
    <property type="match status" value="1"/>
</dbReference>
<dbReference type="Gene3D" id="1.10.150.20">
    <property type="entry name" value="5' to 3' exonuclease, C-terminal subdomain"/>
    <property type="match status" value="1"/>
</dbReference>
<dbReference type="Gene3D" id="3.30.470.30">
    <property type="entry name" value="DNA ligase/mRNA capping enzyme"/>
    <property type="match status" value="1"/>
</dbReference>
<dbReference type="Gene3D" id="1.10.287.610">
    <property type="entry name" value="Helix hairpin bin"/>
    <property type="match status" value="1"/>
</dbReference>
<dbReference type="Gene3D" id="2.40.50.140">
    <property type="entry name" value="Nucleic acid-binding proteins"/>
    <property type="match status" value="1"/>
</dbReference>
<dbReference type="HAMAP" id="MF_01587">
    <property type="entry name" value="DNA_ligase_B"/>
    <property type="match status" value="1"/>
</dbReference>
<dbReference type="InterPro" id="IPR020923">
    <property type="entry name" value="DNA_ligase_B"/>
</dbReference>
<dbReference type="InterPro" id="IPR013839">
    <property type="entry name" value="DNAligase_adenylation"/>
</dbReference>
<dbReference type="InterPro" id="IPR013840">
    <property type="entry name" value="DNAligase_N"/>
</dbReference>
<dbReference type="InterPro" id="IPR012340">
    <property type="entry name" value="NA-bd_OB-fold"/>
</dbReference>
<dbReference type="InterPro" id="IPR050326">
    <property type="entry name" value="NAD_dep_DNA_ligaseB"/>
</dbReference>
<dbReference type="InterPro" id="IPR004150">
    <property type="entry name" value="NAD_DNA_ligase_OB"/>
</dbReference>
<dbReference type="InterPro" id="IPR010994">
    <property type="entry name" value="RuvA_2-like"/>
</dbReference>
<dbReference type="NCBIfam" id="NF005987">
    <property type="entry name" value="PRK08097.1"/>
    <property type="match status" value="1"/>
</dbReference>
<dbReference type="PANTHER" id="PTHR47810">
    <property type="entry name" value="DNA LIGASE"/>
    <property type="match status" value="1"/>
</dbReference>
<dbReference type="PANTHER" id="PTHR47810:SF1">
    <property type="entry name" value="DNA LIGASE B"/>
    <property type="match status" value="1"/>
</dbReference>
<dbReference type="Pfam" id="PF01653">
    <property type="entry name" value="DNA_ligase_aden"/>
    <property type="match status" value="1"/>
</dbReference>
<dbReference type="Pfam" id="PF03120">
    <property type="entry name" value="DNA_ligase_OB"/>
    <property type="match status" value="1"/>
</dbReference>
<dbReference type="SMART" id="SM00532">
    <property type="entry name" value="LIGANc"/>
    <property type="match status" value="1"/>
</dbReference>
<dbReference type="SUPFAM" id="SSF56091">
    <property type="entry name" value="DNA ligase/mRNA capping enzyme, catalytic domain"/>
    <property type="match status" value="1"/>
</dbReference>
<dbReference type="SUPFAM" id="SSF50249">
    <property type="entry name" value="Nucleic acid-binding proteins"/>
    <property type="match status" value="1"/>
</dbReference>
<dbReference type="SUPFAM" id="SSF47781">
    <property type="entry name" value="RuvA domain 2-like"/>
    <property type="match status" value="1"/>
</dbReference>
<gene>
    <name evidence="1" type="primary">ligB</name>
    <name type="ordered locus">YPK_4175</name>
</gene>
<protein>
    <recommendedName>
        <fullName evidence="1">DNA ligase B</fullName>
        <ecNumber evidence="1">6.5.1.2</ecNumber>
    </recommendedName>
    <alternativeName>
        <fullName evidence="1">Polydeoxyribonucleotide synthase [NAD(+)] B</fullName>
    </alternativeName>
</protein>
<proteinExistence type="inferred from homology"/>
<feature type="chain" id="PRO_1000147735" description="DNA ligase B">
    <location>
        <begin position="1"/>
        <end position="567"/>
    </location>
</feature>
<feature type="active site" description="N6-AMP-lysine intermediate" evidence="1">
    <location>
        <position position="132"/>
    </location>
</feature>
<organism>
    <name type="scientific">Yersinia pseudotuberculosis serotype O:3 (strain YPIII)</name>
    <dbReference type="NCBI Taxonomy" id="502800"/>
    <lineage>
        <taxon>Bacteria</taxon>
        <taxon>Pseudomonadati</taxon>
        <taxon>Pseudomonadota</taxon>
        <taxon>Gammaproteobacteria</taxon>
        <taxon>Enterobacterales</taxon>
        <taxon>Yersiniaceae</taxon>
        <taxon>Yersinia</taxon>
    </lineage>
</organism>
<accession>B1JQZ3</accession>
<sequence length="567" mass="63612">MNILNLKIIMFLLISNTIVVGGAWATSTCPDWPATRIAVEINALEQQLNKWSAAYHQQGHSPVTDDIYDQLQDKLRVWQSCRGLPDKTESQPIPGKGQFLHPVAHTGLKKLKDETALTRWMAGRKNLWVQPKVDGVAVTLVYHGGKLVQLLSRGNGVKGQNWTEKAPFISAIPQYIANAPALLTLQGELFLLMDGHQQAKSGGVNARSTVAGALMRKSPSPLLAQVGVFIWAWPDGPTTMKEKVALLQVMGFPFTAKYSEPVMSHLDVVQWRQFWFQAPLPFVTDGVVVRQEEEPAGRYWQATPGQWSMAWKYPPLQHIAEVKDIHFTLGRTGKGTVVLEVLPIKIDDKWIRRVNIGSVTRWKQWDIAPGDHITLALAGHGIPRLDNVVWRVHQRNTITAPNWDKFHQLSCFQRLPHGCEPQFLSRLIWLSGPGGLDIGGIGGGFWQELIHHELINDLVGWLLLTPEQIASIPGIGNARAEKIYQQFQRAKQQPFSRWLLALGFPQVVSVDAQWQVVLRRSLSEWATMAGIGQMRAKQIKHFLDHPDVQALADFLSTQKVVGFELTE</sequence>
<reference key="1">
    <citation type="submission" date="2008-02" db="EMBL/GenBank/DDBJ databases">
        <title>Complete sequence of Yersinia pseudotuberculosis YPIII.</title>
        <authorList>
            <consortium name="US DOE Joint Genome Institute"/>
            <person name="Copeland A."/>
            <person name="Lucas S."/>
            <person name="Lapidus A."/>
            <person name="Glavina del Rio T."/>
            <person name="Dalin E."/>
            <person name="Tice H."/>
            <person name="Bruce D."/>
            <person name="Goodwin L."/>
            <person name="Pitluck S."/>
            <person name="Munk A.C."/>
            <person name="Brettin T."/>
            <person name="Detter J.C."/>
            <person name="Han C."/>
            <person name="Tapia R."/>
            <person name="Schmutz J."/>
            <person name="Larimer F."/>
            <person name="Land M."/>
            <person name="Hauser L."/>
            <person name="Challacombe J.F."/>
            <person name="Green L."/>
            <person name="Lindler L.E."/>
            <person name="Nikolich M.P."/>
            <person name="Richardson P."/>
        </authorList>
    </citation>
    <scope>NUCLEOTIDE SEQUENCE [LARGE SCALE GENOMIC DNA]</scope>
    <source>
        <strain>YPIII</strain>
    </source>
</reference>
<evidence type="ECO:0000255" key="1">
    <source>
        <dbReference type="HAMAP-Rule" id="MF_01587"/>
    </source>
</evidence>
<keyword id="KW-0227">DNA damage</keyword>
<keyword id="KW-0234">DNA repair</keyword>
<keyword id="KW-0235">DNA replication</keyword>
<keyword id="KW-0436">Ligase</keyword>
<keyword id="KW-0520">NAD</keyword>
<name>LIGB_YERPY</name>
<comment type="function">
    <text evidence="1">Catalyzes the formation of phosphodiester linkages between 5'-phosphoryl and 3'-hydroxyl groups in double-stranded DNA using NAD as a coenzyme and as the energy source for the reaction.</text>
</comment>
<comment type="catalytic activity">
    <reaction evidence="1">
        <text>NAD(+) + (deoxyribonucleotide)n-3'-hydroxyl + 5'-phospho-(deoxyribonucleotide)m = (deoxyribonucleotide)n+m + AMP + beta-nicotinamide D-nucleotide.</text>
        <dbReference type="EC" id="6.5.1.2"/>
    </reaction>
</comment>
<comment type="similarity">
    <text evidence="1">Belongs to the NAD-dependent DNA ligase family. LigB subfamily.</text>
</comment>